<reference key="1">
    <citation type="journal article" date="1996" name="J. Bacteriol.">
        <title>The tra region of the nopaline-type Ti plasmid is a chimera with elements related to the transfer systems of RSF1010, RP4, and F.</title>
        <authorList>
            <person name="Farrand S.K."/>
            <person name="Hwang I."/>
            <person name="Cook D.M."/>
        </authorList>
    </citation>
    <scope>NUCLEOTIDE SEQUENCE [GENOMIC DNA]</scope>
</reference>
<reference key="2">
    <citation type="journal article" date="2001" name="Science">
        <title>The genome of the natural genetic engineer Agrobacterium tumefaciens C58.</title>
        <authorList>
            <person name="Wood D.W."/>
            <person name="Setubal J.C."/>
            <person name="Kaul R."/>
            <person name="Monks D.E."/>
            <person name="Kitajima J.P."/>
            <person name="Okura V.K."/>
            <person name="Zhou Y."/>
            <person name="Chen L."/>
            <person name="Wood G.E."/>
            <person name="Almeida N.F. Jr."/>
            <person name="Woo L."/>
            <person name="Chen Y."/>
            <person name="Paulsen I.T."/>
            <person name="Eisen J.A."/>
            <person name="Karp P.D."/>
            <person name="Bovee D. Sr."/>
            <person name="Chapman P."/>
            <person name="Clendenning J."/>
            <person name="Deatherage G."/>
            <person name="Gillet W."/>
            <person name="Grant C."/>
            <person name="Kutyavin T."/>
            <person name="Levy R."/>
            <person name="Li M.-J."/>
            <person name="McClelland E."/>
            <person name="Palmieri A."/>
            <person name="Raymond C."/>
            <person name="Rouse G."/>
            <person name="Saenphimmachak C."/>
            <person name="Wu Z."/>
            <person name="Romero P."/>
            <person name="Gordon D."/>
            <person name="Zhang S."/>
            <person name="Yoo H."/>
            <person name="Tao Y."/>
            <person name="Biddle P."/>
            <person name="Jung M."/>
            <person name="Krespan W."/>
            <person name="Perry M."/>
            <person name="Gordon-Kamm B."/>
            <person name="Liao L."/>
            <person name="Kim S."/>
            <person name="Hendrick C."/>
            <person name="Zhao Z.-Y."/>
            <person name="Dolan M."/>
            <person name="Chumley F."/>
            <person name="Tingey S.V."/>
            <person name="Tomb J.-F."/>
            <person name="Gordon M.P."/>
            <person name="Olson M.V."/>
            <person name="Nester E.W."/>
        </authorList>
    </citation>
    <scope>NUCLEOTIDE SEQUENCE [LARGE SCALE GENOMIC DNA]</scope>
</reference>
<reference key="3">
    <citation type="journal article" date="2001" name="Science">
        <title>Genome sequence of the plant pathogen and biotechnology agent Agrobacterium tumefaciens C58.</title>
        <authorList>
            <person name="Goodner B."/>
            <person name="Hinkle G."/>
            <person name="Gattung S."/>
            <person name="Miller N."/>
            <person name="Blanchard M."/>
            <person name="Qurollo B."/>
            <person name="Goldman B.S."/>
            <person name="Cao Y."/>
            <person name="Askenazi M."/>
            <person name="Halling C."/>
            <person name="Mullin L."/>
            <person name="Houmiel K."/>
            <person name="Gordon J."/>
            <person name="Vaudin M."/>
            <person name="Iartchouk O."/>
            <person name="Epp A."/>
            <person name="Liu F."/>
            <person name="Wollam C."/>
            <person name="Allinger M."/>
            <person name="Doughty D."/>
            <person name="Scott C."/>
            <person name="Lappas C."/>
            <person name="Markelz B."/>
            <person name="Flanagan C."/>
            <person name="Crowell C."/>
            <person name="Gurson J."/>
            <person name="Lomo C."/>
            <person name="Sear C."/>
            <person name="Strub G."/>
            <person name="Cielo C."/>
            <person name="Slater S."/>
        </authorList>
    </citation>
    <scope>NUCLEOTIDE SEQUENCE [LARGE SCALE GENOMIC DNA]</scope>
    <source>
        <strain>C58 / ATCC 33970</strain>
    </source>
</reference>
<accession>Q44348</accession>
<proteinExistence type="predicted"/>
<geneLocation type="plasmid">
    <name>pTiC58</name>
</geneLocation>
<gene>
    <name type="primary">traC</name>
    <name type="ordered locus">Atu6126</name>
    <name type="ORF">AGR_pTi_235</name>
</gene>
<name>TRAC_AGRFC</name>
<protein>
    <recommendedName>
        <fullName>Conjugal transfer protein TraC</fullName>
    </recommendedName>
</protein>
<feature type="chain" id="PRO_0000065599" description="Conjugal transfer protein TraC">
    <location>
        <begin position="1"/>
        <end position="98"/>
    </location>
</feature>
<feature type="region of interest" description="Disordered" evidence="1">
    <location>
        <begin position="60"/>
        <end position="98"/>
    </location>
</feature>
<organism>
    <name type="scientific">Agrobacterium fabrum (strain C58 / ATCC 33970)</name>
    <name type="common">Agrobacterium tumefaciens (strain C58)</name>
    <dbReference type="NCBI Taxonomy" id="176299"/>
    <lineage>
        <taxon>Bacteria</taxon>
        <taxon>Pseudomonadati</taxon>
        <taxon>Pseudomonadota</taxon>
        <taxon>Alphaproteobacteria</taxon>
        <taxon>Hyphomicrobiales</taxon>
        <taxon>Rhizobiaceae</taxon>
        <taxon>Rhizobium/Agrobacterium group</taxon>
        <taxon>Agrobacterium</taxon>
        <taxon>Agrobacterium tumefaciens complex</taxon>
    </lineage>
</organism>
<keyword id="KW-0184">Conjugation</keyword>
<keyword id="KW-0614">Plasmid</keyword>
<keyword id="KW-1185">Reference proteome</keyword>
<dbReference type="EMBL" id="AF010180">
    <property type="protein sequence ID" value="AAC17206.1"/>
    <property type="molecule type" value="Genomic_DNA"/>
</dbReference>
<dbReference type="EMBL" id="AE007871">
    <property type="protein sequence ID" value="AAK91090.1"/>
    <property type="molecule type" value="Genomic_DNA"/>
</dbReference>
<dbReference type="PIR" id="AD3243">
    <property type="entry name" value="AD3243"/>
</dbReference>
<dbReference type="PIR" id="T03418">
    <property type="entry name" value="T03418"/>
</dbReference>
<dbReference type="RefSeq" id="NP_396649.1">
    <property type="nucleotide sequence ID" value="NC_003065.3"/>
</dbReference>
<dbReference type="RefSeq" id="WP_010974896.1">
    <property type="nucleotide sequence ID" value="NC_003065.3"/>
</dbReference>
<dbReference type="SMR" id="Q44348"/>
<dbReference type="EnsemblBacteria" id="AAK91090">
    <property type="protein sequence ID" value="AAK91090"/>
    <property type="gene ID" value="Atu6126"/>
</dbReference>
<dbReference type="GeneID" id="1137449"/>
<dbReference type="KEGG" id="atu:Atu6126"/>
<dbReference type="PATRIC" id="fig|176299.10.peg.5333"/>
<dbReference type="HOGENOM" id="CLU_182992_0_0_5"/>
<dbReference type="OrthoDB" id="7997694at2"/>
<dbReference type="PhylomeDB" id="Q44348"/>
<dbReference type="BioCyc" id="AGRO:ATU6126-MONOMER"/>
<dbReference type="Proteomes" id="UP000000813">
    <property type="component" value="Plasmid Ti"/>
</dbReference>
<dbReference type="InterPro" id="IPR053443">
    <property type="entry name" value="Conjugal_Transfer_TraC"/>
</dbReference>
<dbReference type="InterPro" id="IPR012930">
    <property type="entry name" value="TraC"/>
</dbReference>
<dbReference type="NCBIfam" id="NF043004">
    <property type="entry name" value="CjTranTraC_Agrob"/>
    <property type="match status" value="1"/>
</dbReference>
<dbReference type="NCBIfam" id="NF010422">
    <property type="entry name" value="PRK13848.1"/>
    <property type="match status" value="1"/>
</dbReference>
<dbReference type="Pfam" id="PF07820">
    <property type="entry name" value="TraC"/>
    <property type="match status" value="1"/>
</dbReference>
<sequence>MKKPSSKIREEIARLQDQLKQAETREAERIGRIALKAGLGEIDIEESQLQAAFEEVAKRFRGGKGSATGKRQAGESRTGTEPSAALASGADEGGSGEA</sequence>
<evidence type="ECO:0000256" key="1">
    <source>
        <dbReference type="SAM" id="MobiDB-lite"/>
    </source>
</evidence>